<dbReference type="EC" id="2.3.1.181" evidence="1"/>
<dbReference type="EMBL" id="CP000553">
    <property type="protein sequence ID" value="ABM75017.1"/>
    <property type="molecule type" value="Genomic_DNA"/>
</dbReference>
<dbReference type="RefSeq" id="WP_011823204.1">
    <property type="nucleotide sequence ID" value="NC_008819.1"/>
</dbReference>
<dbReference type="SMR" id="A2C0K7"/>
<dbReference type="KEGG" id="pme:NATL1_04531"/>
<dbReference type="eggNOG" id="COG0321">
    <property type="taxonomic scope" value="Bacteria"/>
</dbReference>
<dbReference type="HOGENOM" id="CLU_035168_1_0_3"/>
<dbReference type="UniPathway" id="UPA00538">
    <property type="reaction ID" value="UER00592"/>
</dbReference>
<dbReference type="Proteomes" id="UP000002592">
    <property type="component" value="Chromosome"/>
</dbReference>
<dbReference type="GO" id="GO:0005737">
    <property type="term" value="C:cytoplasm"/>
    <property type="evidence" value="ECO:0007669"/>
    <property type="project" value="UniProtKB-SubCell"/>
</dbReference>
<dbReference type="GO" id="GO:0033819">
    <property type="term" value="F:lipoyl(octanoyl) transferase activity"/>
    <property type="evidence" value="ECO:0007669"/>
    <property type="project" value="UniProtKB-EC"/>
</dbReference>
<dbReference type="GO" id="GO:0036211">
    <property type="term" value="P:protein modification process"/>
    <property type="evidence" value="ECO:0007669"/>
    <property type="project" value="InterPro"/>
</dbReference>
<dbReference type="CDD" id="cd16444">
    <property type="entry name" value="LipB"/>
    <property type="match status" value="1"/>
</dbReference>
<dbReference type="Gene3D" id="3.30.930.10">
    <property type="entry name" value="Bira Bifunctional Protein, Domain 2"/>
    <property type="match status" value="1"/>
</dbReference>
<dbReference type="HAMAP" id="MF_00013">
    <property type="entry name" value="LipB"/>
    <property type="match status" value="1"/>
</dbReference>
<dbReference type="InterPro" id="IPR045864">
    <property type="entry name" value="aa-tRNA-synth_II/BPL/LPL"/>
</dbReference>
<dbReference type="InterPro" id="IPR004143">
    <property type="entry name" value="BPL_LPL_catalytic"/>
</dbReference>
<dbReference type="InterPro" id="IPR000544">
    <property type="entry name" value="Octanoyltransferase"/>
</dbReference>
<dbReference type="InterPro" id="IPR020605">
    <property type="entry name" value="Octanoyltransferase_CS"/>
</dbReference>
<dbReference type="NCBIfam" id="TIGR00214">
    <property type="entry name" value="lipB"/>
    <property type="match status" value="1"/>
</dbReference>
<dbReference type="PANTHER" id="PTHR10993:SF7">
    <property type="entry name" value="LIPOYLTRANSFERASE 2, MITOCHONDRIAL-RELATED"/>
    <property type="match status" value="1"/>
</dbReference>
<dbReference type="PANTHER" id="PTHR10993">
    <property type="entry name" value="OCTANOYLTRANSFERASE"/>
    <property type="match status" value="1"/>
</dbReference>
<dbReference type="Pfam" id="PF21948">
    <property type="entry name" value="LplA-B_cat"/>
    <property type="match status" value="1"/>
</dbReference>
<dbReference type="SUPFAM" id="SSF55681">
    <property type="entry name" value="Class II aaRS and biotin synthetases"/>
    <property type="match status" value="1"/>
</dbReference>
<dbReference type="PROSITE" id="PS51733">
    <property type="entry name" value="BPL_LPL_CATALYTIC"/>
    <property type="match status" value="1"/>
</dbReference>
<dbReference type="PROSITE" id="PS01313">
    <property type="entry name" value="LIPB"/>
    <property type="match status" value="1"/>
</dbReference>
<evidence type="ECO:0000255" key="1">
    <source>
        <dbReference type="HAMAP-Rule" id="MF_00013"/>
    </source>
</evidence>
<evidence type="ECO:0000255" key="2">
    <source>
        <dbReference type="PROSITE-ProRule" id="PRU01067"/>
    </source>
</evidence>
<evidence type="ECO:0000256" key="3">
    <source>
        <dbReference type="SAM" id="MobiDB-lite"/>
    </source>
</evidence>
<reference key="1">
    <citation type="journal article" date="2007" name="PLoS Genet.">
        <title>Patterns and implications of gene gain and loss in the evolution of Prochlorococcus.</title>
        <authorList>
            <person name="Kettler G.C."/>
            <person name="Martiny A.C."/>
            <person name="Huang K."/>
            <person name="Zucker J."/>
            <person name="Coleman M.L."/>
            <person name="Rodrigue S."/>
            <person name="Chen F."/>
            <person name="Lapidus A."/>
            <person name="Ferriera S."/>
            <person name="Johnson J."/>
            <person name="Steglich C."/>
            <person name="Church G.M."/>
            <person name="Richardson P."/>
            <person name="Chisholm S.W."/>
        </authorList>
    </citation>
    <scope>NUCLEOTIDE SEQUENCE [LARGE SCALE GENOMIC DNA]</scope>
    <source>
        <strain>NATL1A</strain>
    </source>
</reference>
<keyword id="KW-0012">Acyltransferase</keyword>
<keyword id="KW-0963">Cytoplasm</keyword>
<keyword id="KW-0808">Transferase</keyword>
<gene>
    <name evidence="1" type="primary">lipB</name>
    <name type="ordered locus">NATL1_04531</name>
</gene>
<feature type="chain" id="PRO_1000089470" description="Octanoyltransferase">
    <location>
        <begin position="1"/>
        <end position="244"/>
    </location>
</feature>
<feature type="domain" description="BPL/LPL catalytic" evidence="2">
    <location>
        <begin position="59"/>
        <end position="244"/>
    </location>
</feature>
<feature type="region of interest" description="Disordered" evidence="3">
    <location>
        <begin position="1"/>
        <end position="21"/>
    </location>
</feature>
<feature type="compositionally biased region" description="Polar residues" evidence="3">
    <location>
        <begin position="9"/>
        <end position="21"/>
    </location>
</feature>
<feature type="active site" description="Acyl-thioester intermediate" evidence="1">
    <location>
        <position position="199"/>
    </location>
</feature>
<feature type="binding site" evidence="1">
    <location>
        <begin position="101"/>
        <end position="108"/>
    </location>
    <ligand>
        <name>substrate</name>
    </ligand>
</feature>
<feature type="binding site" evidence="1">
    <location>
        <begin position="168"/>
        <end position="170"/>
    </location>
    <ligand>
        <name>substrate</name>
    </ligand>
</feature>
<feature type="binding site" evidence="1">
    <location>
        <begin position="181"/>
        <end position="183"/>
    </location>
    <ligand>
        <name>substrate</name>
    </ligand>
</feature>
<feature type="site" description="Lowers pKa of active site Cys" evidence="1">
    <location>
        <position position="165"/>
    </location>
</feature>
<comment type="function">
    <text evidence="1">Catalyzes the transfer of endogenously produced octanoic acid from octanoyl-acyl-carrier-protein onto the lipoyl domains of lipoate-dependent enzymes. Lipoyl-ACP can also act as a substrate although octanoyl-ACP is likely to be the physiological substrate.</text>
</comment>
<comment type="catalytic activity">
    <reaction evidence="1">
        <text>octanoyl-[ACP] + L-lysyl-[protein] = N(6)-octanoyl-L-lysyl-[protein] + holo-[ACP] + H(+)</text>
        <dbReference type="Rhea" id="RHEA:17665"/>
        <dbReference type="Rhea" id="RHEA-COMP:9636"/>
        <dbReference type="Rhea" id="RHEA-COMP:9685"/>
        <dbReference type="Rhea" id="RHEA-COMP:9752"/>
        <dbReference type="Rhea" id="RHEA-COMP:9928"/>
        <dbReference type="ChEBI" id="CHEBI:15378"/>
        <dbReference type="ChEBI" id="CHEBI:29969"/>
        <dbReference type="ChEBI" id="CHEBI:64479"/>
        <dbReference type="ChEBI" id="CHEBI:78463"/>
        <dbReference type="ChEBI" id="CHEBI:78809"/>
        <dbReference type="EC" id="2.3.1.181"/>
    </reaction>
</comment>
<comment type="pathway">
    <text evidence="1">Protein modification; protein lipoylation via endogenous pathway; protein N(6)-(lipoyl)lysine from octanoyl-[acyl-carrier-protein]: step 1/2.</text>
</comment>
<comment type="subcellular location">
    <subcellularLocation>
        <location evidence="1">Cytoplasm</location>
    </subcellularLocation>
</comment>
<comment type="miscellaneous">
    <text evidence="1">In the reaction, the free carboxyl group of octanoic acid is attached via an amide linkage to the epsilon-amino group of a specific lysine residue of lipoyl domains of lipoate-dependent enzymes.</text>
</comment>
<comment type="similarity">
    <text evidence="1">Belongs to the LipB family.</text>
</comment>
<sequence>MDKKLHSVSPESGPNSNLDLTPQLAQSSSAFLFEPKNIVPFETALGWQKNFLKNLIEEPFSPQAVWLLEHFSCFTMGRGSDKKNLLFEENNSPLPVFSIERGGEVTHHMPGQIVGYLVLNLSLHKKDLAWYLRELEQVLIDVLDLLGIEGKRVDGLTGVWCEDKKVGSIGIGCKRWVTQHGFSLNVDCDLIGFEKIIPCGLDKVKVGKLSDWIPGIKVCDVTPLLRESVKRRFKLNWEKINQSL</sequence>
<accession>A2C0K7</accession>
<organism>
    <name type="scientific">Prochlorococcus marinus (strain NATL1A)</name>
    <dbReference type="NCBI Taxonomy" id="167555"/>
    <lineage>
        <taxon>Bacteria</taxon>
        <taxon>Bacillati</taxon>
        <taxon>Cyanobacteriota</taxon>
        <taxon>Cyanophyceae</taxon>
        <taxon>Synechococcales</taxon>
        <taxon>Prochlorococcaceae</taxon>
        <taxon>Prochlorococcus</taxon>
    </lineage>
</organism>
<protein>
    <recommendedName>
        <fullName evidence="1">Octanoyltransferase</fullName>
        <ecNumber evidence="1">2.3.1.181</ecNumber>
    </recommendedName>
    <alternativeName>
        <fullName evidence="1">Lipoate-protein ligase B</fullName>
    </alternativeName>
    <alternativeName>
        <fullName evidence="1">Lipoyl/octanoyl transferase</fullName>
    </alternativeName>
    <alternativeName>
        <fullName evidence="1">Octanoyl-[acyl-carrier-protein]-protein N-octanoyltransferase</fullName>
    </alternativeName>
</protein>
<name>LIPB_PROM1</name>
<proteinExistence type="inferred from homology"/>